<dbReference type="EC" id="3.4.14.10" evidence="6 7"/>
<dbReference type="EMBL" id="AL158063">
    <property type="status" value="NOT_ANNOTATED_CDS"/>
    <property type="molecule type" value="Genomic_DNA"/>
</dbReference>
<dbReference type="EMBL" id="CH471085">
    <property type="protein sequence ID" value="EAX09059.1"/>
    <property type="molecule type" value="Genomic_DNA"/>
</dbReference>
<dbReference type="EMBL" id="BC039905">
    <property type="protein sequence ID" value="AAH39905.1"/>
    <property type="molecule type" value="mRNA"/>
</dbReference>
<dbReference type="EMBL" id="M73047">
    <property type="protein sequence ID" value="AAA36760.1"/>
    <property type="molecule type" value="mRNA"/>
</dbReference>
<dbReference type="EMBL" id="M55169">
    <property type="protein sequence ID" value="AAA63263.1"/>
    <property type="molecule type" value="mRNA"/>
</dbReference>
<dbReference type="CCDS" id="CCDS9502.1"/>
<dbReference type="PIR" id="S54376">
    <property type="entry name" value="S54376"/>
</dbReference>
<dbReference type="RefSeq" id="NP_001317517.1">
    <property type="nucleotide sequence ID" value="NM_001330588.1"/>
</dbReference>
<dbReference type="RefSeq" id="NP_003282.2">
    <property type="nucleotide sequence ID" value="NM_003291.4"/>
</dbReference>
<dbReference type="SMR" id="P29144"/>
<dbReference type="BioGRID" id="113027">
    <property type="interactions" value="124"/>
</dbReference>
<dbReference type="DIP" id="DIP-50761N"/>
<dbReference type="FunCoup" id="P29144">
    <property type="interactions" value="5277"/>
</dbReference>
<dbReference type="IntAct" id="P29144">
    <property type="interactions" value="78"/>
</dbReference>
<dbReference type="MINT" id="P29144"/>
<dbReference type="STRING" id="9606.ENSP00000365220"/>
<dbReference type="BindingDB" id="P29144"/>
<dbReference type="ChEMBL" id="CHEMBL6156"/>
<dbReference type="GuidetoPHARMACOLOGY" id="2423"/>
<dbReference type="MEROPS" id="S08.A56"/>
<dbReference type="GlyGen" id="P29144">
    <property type="glycosylation" value="2 sites, 1 O-linked glycan (2 sites)"/>
</dbReference>
<dbReference type="iPTMnet" id="P29144"/>
<dbReference type="MetOSite" id="P29144"/>
<dbReference type="PhosphoSitePlus" id="P29144"/>
<dbReference type="SwissPalm" id="P29144"/>
<dbReference type="BioMuta" id="TPP2"/>
<dbReference type="DMDM" id="34223721"/>
<dbReference type="jPOST" id="P29144"/>
<dbReference type="MassIVE" id="P29144"/>
<dbReference type="PaxDb" id="9606-ENSP00000365233"/>
<dbReference type="PeptideAtlas" id="P29144"/>
<dbReference type="ProteomicsDB" id="54528"/>
<dbReference type="Pumba" id="P29144"/>
<dbReference type="Antibodypedia" id="11138">
    <property type="antibodies" value="133 antibodies from 27 providers"/>
</dbReference>
<dbReference type="DNASU" id="7174"/>
<dbReference type="Ensembl" id="ENST00000376065.8">
    <property type="protein sequence ID" value="ENSP00000365233.4"/>
    <property type="gene ID" value="ENSG00000134900.13"/>
</dbReference>
<dbReference type="GeneID" id="7174"/>
<dbReference type="KEGG" id="hsa:7174"/>
<dbReference type="UCSC" id="uc001vpi.5">
    <property type="organism name" value="human"/>
</dbReference>
<dbReference type="AGR" id="HGNC:12016"/>
<dbReference type="CTD" id="7174"/>
<dbReference type="DisGeNET" id="7174"/>
<dbReference type="GeneCards" id="TPP2"/>
<dbReference type="HGNC" id="HGNC:12016">
    <property type="gene designation" value="TPP2"/>
</dbReference>
<dbReference type="HPA" id="ENSG00000134900">
    <property type="expression patterns" value="Low tissue specificity"/>
</dbReference>
<dbReference type="MalaCards" id="TPP2"/>
<dbReference type="MIM" id="190470">
    <property type="type" value="gene"/>
</dbReference>
<dbReference type="MIM" id="619220">
    <property type="type" value="phenotype"/>
</dbReference>
<dbReference type="neXtProt" id="NX_P29144"/>
<dbReference type="OpenTargets" id="ENSG00000134900"/>
<dbReference type="Orphanet" id="444463">
    <property type="disease" value="Autoimmune hemolytic anemia-autoimmune thrombocytopenia-primary immunodeficiency syndrome due to TPP2 deficiency"/>
</dbReference>
<dbReference type="PharmGKB" id="PA36695"/>
<dbReference type="VEuPathDB" id="HostDB:ENSG00000134900"/>
<dbReference type="eggNOG" id="KOG1114">
    <property type="taxonomic scope" value="Eukaryota"/>
</dbReference>
<dbReference type="GeneTree" id="ENSGT00390000014623"/>
<dbReference type="HOGENOM" id="CLU_003084_1_0_1"/>
<dbReference type="InParanoid" id="P29144"/>
<dbReference type="OrthoDB" id="10256524at2759"/>
<dbReference type="PAN-GO" id="P29144">
    <property type="GO annotations" value="2 GO annotations based on evolutionary models"/>
</dbReference>
<dbReference type="PhylomeDB" id="P29144"/>
<dbReference type="TreeFam" id="TF105647"/>
<dbReference type="BRENDA" id="3.4.14.10">
    <property type="organism ID" value="2681"/>
</dbReference>
<dbReference type="PathwayCommons" id="P29144"/>
<dbReference type="Reactome" id="R-HSA-983168">
    <property type="pathway name" value="Antigen processing: Ubiquitination &amp; Proteasome degradation"/>
</dbReference>
<dbReference type="SignaLink" id="P29144"/>
<dbReference type="BioGRID-ORCS" id="7174">
    <property type="hits" value="237 hits in 1165 CRISPR screens"/>
</dbReference>
<dbReference type="CD-CODE" id="8C2F96ED">
    <property type="entry name" value="Centrosome"/>
</dbReference>
<dbReference type="ChiTaRS" id="TPP2">
    <property type="organism name" value="human"/>
</dbReference>
<dbReference type="GeneWiki" id="Tripeptidyl_peptidase_II"/>
<dbReference type="GenomeRNAi" id="7174"/>
<dbReference type="Pharos" id="P29144">
    <property type="development level" value="Tchem"/>
</dbReference>
<dbReference type="PRO" id="PR:P29144"/>
<dbReference type="Proteomes" id="UP000005640">
    <property type="component" value="Chromosome 13"/>
</dbReference>
<dbReference type="RNAct" id="P29144">
    <property type="molecule type" value="protein"/>
</dbReference>
<dbReference type="Bgee" id="ENSG00000134900">
    <property type="expression patterns" value="Expressed in left testis and 202 other cell types or tissues"/>
</dbReference>
<dbReference type="ExpressionAtlas" id="P29144">
    <property type="expression patterns" value="baseline and differential"/>
</dbReference>
<dbReference type="GO" id="GO:0005737">
    <property type="term" value="C:cytoplasm"/>
    <property type="evidence" value="ECO:0000304"/>
    <property type="project" value="ProtInc"/>
</dbReference>
<dbReference type="GO" id="GO:0005829">
    <property type="term" value="C:cytosol"/>
    <property type="evidence" value="ECO:0000314"/>
    <property type="project" value="HPA"/>
</dbReference>
<dbReference type="GO" id="GO:0016604">
    <property type="term" value="C:nuclear body"/>
    <property type="evidence" value="ECO:0000314"/>
    <property type="project" value="HPA"/>
</dbReference>
<dbReference type="GO" id="GO:0005654">
    <property type="term" value="C:nucleoplasm"/>
    <property type="evidence" value="ECO:0000314"/>
    <property type="project" value="HPA"/>
</dbReference>
<dbReference type="GO" id="GO:0004177">
    <property type="term" value="F:aminopeptidase activity"/>
    <property type="evidence" value="ECO:0000315"/>
    <property type="project" value="UniProtKB"/>
</dbReference>
<dbReference type="GO" id="GO:0004175">
    <property type="term" value="F:endopeptidase activity"/>
    <property type="evidence" value="ECO:0000304"/>
    <property type="project" value="ProtInc"/>
</dbReference>
<dbReference type="GO" id="GO:0042802">
    <property type="term" value="F:identical protein binding"/>
    <property type="evidence" value="ECO:0000353"/>
    <property type="project" value="IntAct"/>
</dbReference>
<dbReference type="GO" id="GO:0004252">
    <property type="term" value="F:serine-type endopeptidase activity"/>
    <property type="evidence" value="ECO:0007669"/>
    <property type="project" value="InterPro"/>
</dbReference>
<dbReference type="GO" id="GO:0008240">
    <property type="term" value="F:tripeptidyl-peptidase activity"/>
    <property type="evidence" value="ECO:0000318"/>
    <property type="project" value="GO_Central"/>
</dbReference>
<dbReference type="GO" id="GO:0080144">
    <property type="term" value="P:intracellular amino acid homeostasis"/>
    <property type="evidence" value="ECO:0000315"/>
    <property type="project" value="UniProtKB"/>
</dbReference>
<dbReference type="GO" id="GO:0000209">
    <property type="term" value="P:protein polyubiquitination"/>
    <property type="evidence" value="ECO:0000304"/>
    <property type="project" value="Reactome"/>
</dbReference>
<dbReference type="GO" id="GO:0006508">
    <property type="term" value="P:proteolysis"/>
    <property type="evidence" value="ECO:0000304"/>
    <property type="project" value="ProtInc"/>
</dbReference>
<dbReference type="CDD" id="cd04857">
    <property type="entry name" value="Peptidases_S8_Tripeptidyl_Aminopeptidase_II"/>
    <property type="match status" value="1"/>
</dbReference>
<dbReference type="FunFam" id="1.25.40.710:FF:000001">
    <property type="entry name" value="Tripeptidyl peptidase 2"/>
    <property type="match status" value="1"/>
</dbReference>
<dbReference type="FunFam" id="2.60.40.3170:FF:000001">
    <property type="entry name" value="Tripeptidyl peptidase 2"/>
    <property type="match status" value="1"/>
</dbReference>
<dbReference type="FunFam" id="3.40.50.200:FF:000003">
    <property type="entry name" value="Tripeptidyl peptidase 2"/>
    <property type="match status" value="1"/>
</dbReference>
<dbReference type="FunFam" id="3.40.50.200:FF:000009">
    <property type="entry name" value="tripeptidyl-peptidase 2 isoform X1"/>
    <property type="match status" value="1"/>
</dbReference>
<dbReference type="Gene3D" id="1.25.40.710">
    <property type="match status" value="1"/>
</dbReference>
<dbReference type="Gene3D" id="2.60.40.3170">
    <property type="match status" value="1"/>
</dbReference>
<dbReference type="Gene3D" id="6.10.250.3080">
    <property type="match status" value="1"/>
</dbReference>
<dbReference type="Gene3D" id="3.40.50.200">
    <property type="entry name" value="Peptidase S8/S53 domain"/>
    <property type="match status" value="2"/>
</dbReference>
<dbReference type="InterPro" id="IPR000209">
    <property type="entry name" value="Peptidase_S8/S53_dom"/>
</dbReference>
<dbReference type="InterPro" id="IPR036852">
    <property type="entry name" value="Peptidase_S8/S53_dom_sf"/>
</dbReference>
<dbReference type="InterPro" id="IPR022398">
    <property type="entry name" value="Peptidase_S8_His-AS"/>
</dbReference>
<dbReference type="InterPro" id="IPR023828">
    <property type="entry name" value="Peptidase_S8_Ser-AS"/>
</dbReference>
<dbReference type="InterPro" id="IPR050131">
    <property type="entry name" value="Peptidase_S8_subtilisin-like"/>
</dbReference>
<dbReference type="InterPro" id="IPR015500">
    <property type="entry name" value="Peptidase_S8_subtilisin-rel"/>
</dbReference>
<dbReference type="InterPro" id="IPR034051">
    <property type="entry name" value="TPP_II_domain"/>
</dbReference>
<dbReference type="InterPro" id="IPR022232">
    <property type="entry name" value="TPPII_C_art"/>
</dbReference>
<dbReference type="InterPro" id="IPR046939">
    <property type="entry name" value="TPPII_C_sf"/>
</dbReference>
<dbReference type="InterPro" id="IPR048384">
    <property type="entry name" value="TPPII_GBD"/>
</dbReference>
<dbReference type="InterPro" id="IPR048383">
    <property type="entry name" value="TPPII_Ig-like-1"/>
</dbReference>
<dbReference type="InterPro" id="IPR022229">
    <property type="entry name" value="TPPII_Ig-like-2"/>
</dbReference>
<dbReference type="InterPro" id="IPR046940">
    <property type="entry name" value="TPPII_Ig-like_sf"/>
</dbReference>
<dbReference type="PANTHER" id="PTHR43806">
    <property type="entry name" value="PEPTIDASE S8"/>
    <property type="match status" value="1"/>
</dbReference>
<dbReference type="PANTHER" id="PTHR43806:SF14">
    <property type="entry name" value="TRIPEPTIDYL-PEPTIDASE 2"/>
    <property type="match status" value="1"/>
</dbReference>
<dbReference type="Pfam" id="PF00082">
    <property type="entry name" value="Peptidase_S8"/>
    <property type="match status" value="1"/>
</dbReference>
<dbReference type="Pfam" id="PF12580">
    <property type="entry name" value="TPPII"/>
    <property type="match status" value="1"/>
</dbReference>
<dbReference type="Pfam" id="PF12583">
    <property type="entry name" value="TPPII_C"/>
    <property type="match status" value="1"/>
</dbReference>
<dbReference type="Pfam" id="PF21316">
    <property type="entry name" value="TPPII_GBD"/>
    <property type="match status" value="1"/>
</dbReference>
<dbReference type="Pfam" id="PF21223">
    <property type="entry name" value="TPPII_Ig-like-1"/>
    <property type="match status" value="1"/>
</dbReference>
<dbReference type="PRINTS" id="PR00723">
    <property type="entry name" value="SUBTILISIN"/>
</dbReference>
<dbReference type="SUPFAM" id="SSF52743">
    <property type="entry name" value="Subtilisin-like"/>
    <property type="match status" value="1"/>
</dbReference>
<dbReference type="PROSITE" id="PS51892">
    <property type="entry name" value="SUBTILASE"/>
    <property type="match status" value="1"/>
</dbReference>
<dbReference type="PROSITE" id="PS00137">
    <property type="entry name" value="SUBTILASE_HIS"/>
    <property type="match status" value="1"/>
</dbReference>
<dbReference type="PROSITE" id="PS00138">
    <property type="entry name" value="SUBTILASE_SER"/>
    <property type="match status" value="1"/>
</dbReference>
<proteinExistence type="evidence at protein level"/>
<gene>
    <name type="primary">TPP2</name>
</gene>
<organism>
    <name type="scientific">Homo sapiens</name>
    <name type="common">Human</name>
    <dbReference type="NCBI Taxonomy" id="9606"/>
    <lineage>
        <taxon>Eukaryota</taxon>
        <taxon>Metazoa</taxon>
        <taxon>Chordata</taxon>
        <taxon>Craniata</taxon>
        <taxon>Vertebrata</taxon>
        <taxon>Euteleostomi</taxon>
        <taxon>Mammalia</taxon>
        <taxon>Eutheria</taxon>
        <taxon>Euarchontoglires</taxon>
        <taxon>Primates</taxon>
        <taxon>Haplorrhini</taxon>
        <taxon>Catarrhini</taxon>
        <taxon>Hominidae</taxon>
        <taxon>Homo</taxon>
    </lineage>
</organism>
<feature type="initiator methionine" description="Removed" evidence="8">
    <location>
        <position position="1"/>
    </location>
</feature>
<feature type="chain" id="PRO_0000076422" description="Tripeptidyl-peptidase 2">
    <location>
        <begin position="2"/>
        <end position="1249"/>
    </location>
</feature>
<feature type="domain" description="Peptidase S8" evidence="3">
    <location>
        <begin position="9"/>
        <end position="508"/>
    </location>
</feature>
<feature type="region of interest" description="Disordered" evidence="4">
    <location>
        <begin position="998"/>
        <end position="1018"/>
    </location>
</feature>
<feature type="compositionally biased region" description="Basic and acidic residues" evidence="4">
    <location>
        <begin position="1003"/>
        <end position="1018"/>
    </location>
</feature>
<feature type="active site" description="Charge relay system" evidence="3">
    <location>
        <position position="44"/>
    </location>
</feature>
<feature type="active site" description="Charge relay system" evidence="3">
    <location>
        <position position="264"/>
    </location>
</feature>
<feature type="active site" description="Charge relay system" evidence="3">
    <location>
        <position position="449"/>
    </location>
</feature>
<feature type="modified residue" description="N-acetylalanine" evidence="8">
    <location>
        <position position="2"/>
    </location>
</feature>
<feature type="modified residue" description="N6-acetyllysine" evidence="2">
    <location>
        <position position="401"/>
    </location>
</feature>
<feature type="modified residue" description="Phosphoserine" evidence="10">
    <location>
        <position position="915"/>
    </location>
</feature>
<feature type="sequence variant" id="VAR_085640" description="Found in a patient diagnosed with multiple sclerosis; uncertain significance; decreased protein abundance; not changed aminopeptidase activity; dbSNP:rs1879008406." evidence="7">
    <original>C</original>
    <variation>G</variation>
    <location>
        <position position="28"/>
    </location>
</feature>
<feature type="sequence variant" id="VAR_085641" description="In IMD78; decreased protein abundance; decreased aminopeptidase activity; dbSNP:rs1882325267." evidence="6">
    <original>G</original>
    <variation>D</variation>
    <location>
        <position position="500"/>
    </location>
</feature>
<feature type="sequence variant" id="VAR_085642" description="Found in a patient diagnosed with multiple sclerosis; uncertain significance; dbSNP:rs760347832." evidence="7">
    <original>T</original>
    <variation>I</variation>
    <location>
        <position position="676"/>
    </location>
</feature>
<feature type="sequence variant" id="VAR_085643" description="In IMD78; loss of expression." evidence="6">
    <location>
        <begin position="781"/>
        <end position="1249"/>
    </location>
</feature>
<feature type="sequence conflict" description="In Ref. 5; AAA36760." evidence="9" ref="5">
    <original>G</original>
    <variation>R</variation>
    <location>
        <position position="252"/>
    </location>
</feature>
<comment type="function">
    <text evidence="2 6 7">Cytosolic tripeptidyl-peptidase that releases N-terminal tripeptides from polypeptides and is a component of the proteolytic cascade acting downstream of the 26S proteasome in the ubiquitin-proteasome pathway (PubMed:25525876, PubMed:30533531). It plays an important role in intracellular amino acid homeostasis (PubMed:25525876). Stimulates adipogenesis (By similarity).</text>
</comment>
<comment type="catalytic activity">
    <reaction evidence="6 7">
        <text>Release of an N-terminal tripeptide from a polypeptide.</text>
        <dbReference type="EC" id="3.4.14.10"/>
    </reaction>
</comment>
<comment type="interaction">
    <interactant intactId="EBI-1044672">
        <id>P29144</id>
    </interactant>
    <interactant intactId="EBI-2339219">
        <id>Q08426</id>
        <label>EHHADH</label>
    </interactant>
    <organismsDiffer>false</organismsDiffer>
    <experiments>5</experiments>
</comment>
<comment type="interaction">
    <interactant intactId="EBI-1044672">
        <id>P29144</id>
    </interactant>
    <interactant intactId="EBI-713836">
        <id>P06746</id>
        <label>POLB</label>
    </interactant>
    <organismsDiffer>false</organismsDiffer>
    <experiments>8</experiments>
</comment>
<comment type="interaction">
    <interactant intactId="EBI-1044672">
        <id>P29144</id>
    </interactant>
    <interactant intactId="EBI-710402">
        <id>Q96I34</id>
        <label>PPP1R16A</label>
    </interactant>
    <organismsDiffer>false</organismsDiffer>
    <experiments>4</experiments>
</comment>
<comment type="interaction">
    <interactant intactId="EBI-1044672">
        <id>P29144</id>
    </interactant>
    <interactant intactId="EBI-1044672">
        <id>P29144</id>
        <label>TPP2</label>
    </interactant>
    <organismsDiffer>false</organismsDiffer>
    <experiments>2</experiments>
</comment>
<comment type="subcellular location">
    <subcellularLocation>
        <location evidence="5">Cytoplasm</location>
    </subcellularLocation>
    <subcellularLocation>
        <location evidence="5">Nucleus</location>
    </subcellularLocation>
    <text>Translocates to the nucleus in response to gamma-irradiation.</text>
</comment>
<comment type="disease" evidence="6">
    <disease id="DI-06055">
        <name>Immunodeficiency 78 with autoimmunity and developmental delay</name>
        <acronym>IMD78</acronym>
        <description>An autosomal recessive disorder characterized by immune dysregulation, increased susceptibility to bacterial, viral and fungal infections, recurrent sinopulmonary or skin infections, and autoimmune abnormalities including hemolytic anemia and autoimmune cytopenias. Patients also have global developmental delay with speech delay and variable intellectual disability. Disease onset is in infancy or early childhood.</description>
        <dbReference type="MIM" id="619220"/>
    </disease>
    <text>The disease is caused by variants affecting the gene represented in this entry.</text>
</comment>
<comment type="miscellaneous">
    <text evidence="1">The limitation of proteolytic products to tripeptides is achieved by tailoring the size of the substrate-binding cleft: the two negatively charged residues Glu-305 and Glu-331 that are blocking position P4 limit the number of residues that can be accommodated in the binding cleft and thus create a molecular ruler. At the same time, they orient substrates so that the tripeptides are removed exclusively from the N-terminus (By similarity).</text>
</comment>
<comment type="similarity">
    <text evidence="9">Belongs to the peptidase S8 family.</text>
</comment>
<accession>P29144</accession>
<accession>Q5VZU8</accession>
<name>TPP2_HUMAN</name>
<keyword id="KW-0007">Acetylation</keyword>
<keyword id="KW-0031">Aminopeptidase</keyword>
<keyword id="KW-0963">Cytoplasm</keyword>
<keyword id="KW-0903">Direct protein sequencing</keyword>
<keyword id="KW-0225">Disease variant</keyword>
<keyword id="KW-0378">Hydrolase</keyword>
<keyword id="KW-0539">Nucleus</keyword>
<keyword id="KW-0597">Phosphoprotein</keyword>
<keyword id="KW-0645">Protease</keyword>
<keyword id="KW-1267">Proteomics identification</keyword>
<keyword id="KW-1185">Reference proteome</keyword>
<keyword id="KW-0720">Serine protease</keyword>
<evidence type="ECO:0000250" key="1"/>
<evidence type="ECO:0000250" key="2">
    <source>
        <dbReference type="UniProtKB" id="Q64514"/>
    </source>
</evidence>
<evidence type="ECO:0000255" key="3">
    <source>
        <dbReference type="PROSITE-ProRule" id="PRU01240"/>
    </source>
</evidence>
<evidence type="ECO:0000256" key="4">
    <source>
        <dbReference type="SAM" id="MobiDB-lite"/>
    </source>
</evidence>
<evidence type="ECO:0000269" key="5">
    <source>
    </source>
</evidence>
<evidence type="ECO:0000269" key="6">
    <source>
    </source>
</evidence>
<evidence type="ECO:0000269" key="7">
    <source>
    </source>
</evidence>
<evidence type="ECO:0000269" key="8">
    <source ref="6"/>
</evidence>
<evidence type="ECO:0000305" key="9"/>
<evidence type="ECO:0007744" key="10">
    <source>
    </source>
</evidence>
<reference key="1">
    <citation type="journal article" date="2004" name="Nature">
        <title>The DNA sequence and analysis of human chromosome 13.</title>
        <authorList>
            <person name="Dunham A."/>
            <person name="Matthews L.H."/>
            <person name="Burton J."/>
            <person name="Ashurst J.L."/>
            <person name="Howe K.L."/>
            <person name="Ashcroft K.J."/>
            <person name="Beare D.M."/>
            <person name="Burford D.C."/>
            <person name="Hunt S.E."/>
            <person name="Griffiths-Jones S."/>
            <person name="Jones M.C."/>
            <person name="Keenan S.J."/>
            <person name="Oliver K."/>
            <person name="Scott C.E."/>
            <person name="Ainscough R."/>
            <person name="Almeida J.P."/>
            <person name="Ambrose K.D."/>
            <person name="Andrews D.T."/>
            <person name="Ashwell R.I.S."/>
            <person name="Babbage A.K."/>
            <person name="Bagguley C.L."/>
            <person name="Bailey J."/>
            <person name="Bannerjee R."/>
            <person name="Barlow K.F."/>
            <person name="Bates K."/>
            <person name="Beasley H."/>
            <person name="Bird C.P."/>
            <person name="Bray-Allen S."/>
            <person name="Brown A.J."/>
            <person name="Brown J.Y."/>
            <person name="Burrill W."/>
            <person name="Carder C."/>
            <person name="Carter N.P."/>
            <person name="Chapman J.C."/>
            <person name="Clamp M.E."/>
            <person name="Clark S.Y."/>
            <person name="Clarke G."/>
            <person name="Clee C.M."/>
            <person name="Clegg S.C."/>
            <person name="Cobley V."/>
            <person name="Collins J.E."/>
            <person name="Corby N."/>
            <person name="Coville G.J."/>
            <person name="Deloukas P."/>
            <person name="Dhami P."/>
            <person name="Dunham I."/>
            <person name="Dunn M."/>
            <person name="Earthrowl M.E."/>
            <person name="Ellington A.G."/>
            <person name="Faulkner L."/>
            <person name="Frankish A.G."/>
            <person name="Frankland J."/>
            <person name="French L."/>
            <person name="Garner P."/>
            <person name="Garnett J."/>
            <person name="Gilbert J.G.R."/>
            <person name="Gilson C.J."/>
            <person name="Ghori J."/>
            <person name="Grafham D.V."/>
            <person name="Gribble S.M."/>
            <person name="Griffiths C."/>
            <person name="Hall R.E."/>
            <person name="Hammond S."/>
            <person name="Harley J.L."/>
            <person name="Hart E.A."/>
            <person name="Heath P.D."/>
            <person name="Howden P.J."/>
            <person name="Huckle E.J."/>
            <person name="Hunt P.J."/>
            <person name="Hunt A.R."/>
            <person name="Johnson C."/>
            <person name="Johnson D."/>
            <person name="Kay M."/>
            <person name="Kimberley A.M."/>
            <person name="King A."/>
            <person name="Laird G.K."/>
            <person name="Langford C.J."/>
            <person name="Lawlor S."/>
            <person name="Leongamornlert D.A."/>
            <person name="Lloyd D.M."/>
            <person name="Lloyd C."/>
            <person name="Loveland J.E."/>
            <person name="Lovell J."/>
            <person name="Martin S."/>
            <person name="Mashreghi-Mohammadi M."/>
            <person name="McLaren S.J."/>
            <person name="McMurray A."/>
            <person name="Milne S."/>
            <person name="Moore M.J.F."/>
            <person name="Nickerson T."/>
            <person name="Palmer S.A."/>
            <person name="Pearce A.V."/>
            <person name="Peck A.I."/>
            <person name="Pelan S."/>
            <person name="Phillimore B."/>
            <person name="Porter K.M."/>
            <person name="Rice C.M."/>
            <person name="Searle S."/>
            <person name="Sehra H.K."/>
            <person name="Shownkeen R."/>
            <person name="Skuce C.D."/>
            <person name="Smith M."/>
            <person name="Steward C.A."/>
            <person name="Sycamore N."/>
            <person name="Tester J."/>
            <person name="Thomas D.W."/>
            <person name="Tracey A."/>
            <person name="Tromans A."/>
            <person name="Tubby B."/>
            <person name="Wall M."/>
            <person name="Wallis J.M."/>
            <person name="West A.P."/>
            <person name="Whitehead S.L."/>
            <person name="Willey D.L."/>
            <person name="Wilming L."/>
            <person name="Wray P.W."/>
            <person name="Wright M.W."/>
            <person name="Young L."/>
            <person name="Coulson A."/>
            <person name="Durbin R.M."/>
            <person name="Hubbard T."/>
            <person name="Sulston J.E."/>
            <person name="Beck S."/>
            <person name="Bentley D.R."/>
            <person name="Rogers J."/>
            <person name="Ross M.T."/>
        </authorList>
    </citation>
    <scope>NUCLEOTIDE SEQUENCE [LARGE SCALE GENOMIC DNA]</scope>
</reference>
<reference key="2">
    <citation type="submission" date="2005-07" db="EMBL/GenBank/DDBJ databases">
        <authorList>
            <person name="Mural R.J."/>
            <person name="Istrail S."/>
            <person name="Sutton G.G."/>
            <person name="Florea L."/>
            <person name="Halpern A.L."/>
            <person name="Mobarry C.M."/>
            <person name="Lippert R."/>
            <person name="Walenz B."/>
            <person name="Shatkay H."/>
            <person name="Dew I."/>
            <person name="Miller J.R."/>
            <person name="Flanigan M.J."/>
            <person name="Edwards N.J."/>
            <person name="Bolanos R."/>
            <person name="Fasulo D."/>
            <person name="Halldorsson B.V."/>
            <person name="Hannenhalli S."/>
            <person name="Turner R."/>
            <person name="Yooseph S."/>
            <person name="Lu F."/>
            <person name="Nusskern D.R."/>
            <person name="Shue B.C."/>
            <person name="Zheng X.H."/>
            <person name="Zhong F."/>
            <person name="Delcher A.L."/>
            <person name="Huson D.H."/>
            <person name="Kravitz S.A."/>
            <person name="Mouchard L."/>
            <person name="Reinert K."/>
            <person name="Remington K.A."/>
            <person name="Clark A.G."/>
            <person name="Waterman M.S."/>
            <person name="Eichler E.E."/>
            <person name="Adams M.D."/>
            <person name="Hunkapiller M.W."/>
            <person name="Myers E.W."/>
            <person name="Venter J.C."/>
        </authorList>
    </citation>
    <scope>NUCLEOTIDE SEQUENCE [LARGE SCALE GENOMIC DNA]</scope>
</reference>
<reference key="3">
    <citation type="journal article" date="2004" name="Genome Res.">
        <title>The status, quality, and expansion of the NIH full-length cDNA project: the Mammalian Gene Collection (MGC).</title>
        <authorList>
            <consortium name="The MGC Project Team"/>
        </authorList>
    </citation>
    <scope>NUCLEOTIDE SEQUENCE [LARGE SCALE MRNA]</scope>
    <source>
        <tissue>Testis</tissue>
    </source>
</reference>
<reference key="4">
    <citation type="journal article" date="1991" name="Biomed. Biochim. Acta">
        <title>Nucleotide sequence of cDNA covering the N-terminus of human tripeptidyl peptidase II.</title>
        <authorList>
            <person name="Tomkinson B."/>
        </authorList>
    </citation>
    <scope>NUCLEOTIDE SEQUENCE [MRNA] OF 1-55</scope>
    <scope>PROTEIN SEQUENCE OF 6-26</scope>
</reference>
<reference key="5">
    <citation type="journal article" date="1991" name="Biochemistry">
        <title>Characterization of cDNA for human tripeptidyl peptidase II: the N-terminal part of the enzyme is similar to subtilisin.</title>
        <authorList>
            <person name="Tomkinson B."/>
            <person name="Jonsson A.-K."/>
        </authorList>
    </citation>
    <scope>NUCLEOTIDE SEQUENCE [MRNA] OF 56-1249</scope>
    <source>
        <tissue>Lymphocyte</tissue>
    </source>
</reference>
<reference key="6">
    <citation type="submission" date="2005-07" db="UniProtKB">
        <authorList>
            <person name="Bienvenut W.V."/>
            <person name="Quadroni M."/>
        </authorList>
    </citation>
    <scope>PROTEIN SEQUENCE OF 2-18 AND 1036-1046</scope>
    <scope>CLEAVAGE OF INITIATOR METHIONINE</scope>
    <scope>ACETYLATION AT ALA-2</scope>
    <scope>IDENTIFICATION BY MASS SPECTROMETRY</scope>
    <source>
        <tissue>B-cell lymphoma</tissue>
    </source>
</reference>
<reference key="7">
    <citation type="journal article" date="1990" name="Biochem. J.">
        <title>Immunological cross-reactivity between human tripeptidyl peptidase II and fibronectin.</title>
        <authorList>
            <person name="Tomkinson B."/>
            <person name="Zetterqvist O."/>
        </authorList>
    </citation>
    <scope>PROTEIN SEQUENCE OF 13-26; 1099-1118 AND 440-450</scope>
</reference>
<reference key="8">
    <citation type="journal article" date="1987" name="Proc. Natl. Acad. Sci. U.S.A.">
        <title>Active site of tripeptidyl peptidase II from human erythrocytes is of the subtilisin type.</title>
        <authorList>
            <person name="Tomkinson B."/>
            <person name="Wernstedt C."/>
            <person name="Hellman U."/>
            <person name="Zetterqvist O."/>
        </authorList>
    </citation>
    <scope>PROTEIN SEQUENCE OF 441-450</scope>
</reference>
<reference key="9">
    <citation type="journal article" date="2009" name="Biochem. Biophys. Res. Commun.">
        <title>A role for nuclear translocation of tripeptidyl-peptidase II in reactive oxygen species-dependent DNA damage responses.</title>
        <authorList>
            <person name="Preta G."/>
            <person name="de Klark R."/>
            <person name="Glas R."/>
        </authorList>
    </citation>
    <scope>SUBCELLULAR LOCATION</scope>
</reference>
<reference key="10">
    <citation type="journal article" date="2009" name="Science">
        <title>Lysine acetylation targets protein complexes and co-regulates major cellular functions.</title>
        <authorList>
            <person name="Choudhary C."/>
            <person name="Kumar C."/>
            <person name="Gnad F."/>
            <person name="Nielsen M.L."/>
            <person name="Rehman M."/>
            <person name="Walther T.C."/>
            <person name="Olsen J.V."/>
            <person name="Mann M."/>
        </authorList>
    </citation>
    <scope>IDENTIFICATION BY MASS SPECTROMETRY [LARGE SCALE ANALYSIS]</scope>
</reference>
<reference key="11">
    <citation type="journal article" date="2011" name="BMC Syst. Biol.">
        <title>Initial characterization of the human central proteome.</title>
        <authorList>
            <person name="Burkard T.R."/>
            <person name="Planyavsky M."/>
            <person name="Kaupe I."/>
            <person name="Breitwieser F.P."/>
            <person name="Buerckstuemmer T."/>
            <person name="Bennett K.L."/>
            <person name="Superti-Furga G."/>
            <person name="Colinge J."/>
        </authorList>
    </citation>
    <scope>IDENTIFICATION BY MASS SPECTROMETRY [LARGE SCALE ANALYSIS]</scope>
</reference>
<reference key="12">
    <citation type="journal article" date="2014" name="J. Proteomics">
        <title>An enzyme assisted RP-RPLC approach for in-depth analysis of human liver phosphoproteome.</title>
        <authorList>
            <person name="Bian Y."/>
            <person name="Song C."/>
            <person name="Cheng K."/>
            <person name="Dong M."/>
            <person name="Wang F."/>
            <person name="Huang J."/>
            <person name="Sun D."/>
            <person name="Wang L."/>
            <person name="Ye M."/>
            <person name="Zou H."/>
        </authorList>
    </citation>
    <scope>PHOSPHORYLATION [LARGE SCALE ANALYSIS] AT SER-915</scope>
    <scope>IDENTIFICATION BY MASS SPECTROMETRY [LARGE SCALE ANALYSIS]</scope>
    <source>
        <tissue>Liver</tissue>
    </source>
</reference>
<reference key="13">
    <citation type="journal article" date="2014" name="Cell">
        <title>Dual proteolytic pathways govern glycolysis and immune competence.</title>
        <authorList>
            <person name="Lu W."/>
            <person name="Zhang Y."/>
            <person name="McDonald D.O."/>
            <person name="Jing H."/>
            <person name="Carroll B."/>
            <person name="Robertson N."/>
            <person name="Zhang Q."/>
            <person name="Griffin H."/>
            <person name="Sanderson S."/>
            <person name="Lakey J.H."/>
            <person name="Morgan N.V."/>
            <person name="Reynard L.N."/>
            <person name="Zheng L."/>
            <person name="Murdock H.M."/>
            <person name="Turvey S.E."/>
            <person name="Hackett S.J."/>
            <person name="Prestidge T."/>
            <person name="Hall J.M."/>
            <person name="Cant A.J."/>
            <person name="Matthews H.F."/>
            <person name="Koref M.F."/>
            <person name="Simon A.K."/>
            <person name="Korolchuk V.I."/>
            <person name="Lenardo M.J."/>
            <person name="Hambleton S."/>
            <person name="Su H.C."/>
        </authorList>
    </citation>
    <scope>INVOLVEMENT IN IMD78</scope>
    <scope>VARIANTS IMD78 ASP-500 AND 781-TYR--PHE-1249 DEL</scope>
    <scope>CHARACTERIZATION OF VARIANTS IMD78 ASP-500 AND 781-TYR--PHE-1249 DEL</scope>
    <scope>FUNCTION</scope>
    <scope>CATALYTIC ACTIVITY</scope>
</reference>
<reference key="14">
    <citation type="journal article" date="2018" name="Neurol. Genet.">
        <title>TPP2 mutation associated with sterile brain inflammation mimicking MS.</title>
        <authorList>
            <person name="Reinthaler E.M."/>
            <person name="Graf E."/>
            <person name="Zrzavy T."/>
            <person name="Wieland T."/>
            <person name="Hotzy C."/>
            <person name="Kopecky C."/>
            <person name="Pferschy S."/>
            <person name="Schmied C."/>
            <person name="Leutmezer F."/>
            <person name="Keilani M."/>
            <person name="Lill C.M."/>
            <person name="Hoffjan S."/>
            <person name="Epplen J.T."/>
            <person name="Zettl U.K."/>
            <person name="Hecker M."/>
            <person name="Deutschlaender A."/>
            <person name="Meuth S.G."/>
            <person name="Ahram M."/>
            <person name="Mustafa B."/>
            <person name="El-Khateeb M."/>
            <person name="Vilarino-Gueell C."/>
            <person name="Sadovnick A.D."/>
            <person name="Zimprich F."/>
            <person name="Tomkinson B."/>
            <person name="Strom T."/>
            <person name="Kristoferitsch W."/>
            <person name="Lassmann H."/>
            <person name="Zimprich A."/>
        </authorList>
    </citation>
    <scope>VARIANTS GLY-28 AND ILE-676</scope>
    <scope>CHARACTERIZATION OF VARIANT GLY-28</scope>
    <scope>FUNCTION</scope>
    <scope>CATALYTIC ACTIVITY</scope>
</reference>
<sequence length="1249" mass="138350">MATAATEEPFPFHGLLPKKETGAASFLCRYPEYDGRGVLIAVLDTGVDPGAPGMQVTTDGKPKIVDIIDTTGSGDVNTATEVEPKDGEIVGLSGRVLKIPASWTNPSGKYHIGIKNGYDFYPKALKERIQKERKEKIWDPVHRVALAEACRKQEEFDVANNGSSQANKLIKEELQSQVELLNSFEKKYSDPGPVYDCLVWHDGEVWRACIDSNEDGDLSKSTVLRNYKEAQEYGSFGTAEMLNYSVNIYDDGNLLSIVTSGGAHGTHVASIAAGHFPEEPERNGVAPGAQILSIKIGDTRLSTMETGTGLIRAMIEVINHKCDLVNYSYGEATHWPNSGRICEVINEAVWKHNIIYVSSAGNNGPCLSTVGCPGGTTSSVIGVGAYVSPDMMVAEYSLREKLPANQYTWSSRGPSADGALGVSISAPGGAIASVPNWTLRGTQLMNGTSMSSPNACGGIALILSGLKANNIDYTVHSVRRALENTAVKADNIEVFAQGHGIIQVDKAYDYLVQNTSFANKLGFTVTVGNNRGIYLRDPVQVAAPSDHGVGIEPVFPENTENSEKISLQLHLALTSNSSWVQCPSHLELMNQCRHINIRVDPRGLREGLHYTEVCGYDIASPNAGPLFRVPITAVIAAKVNESSHYDLAFTDVHFKPGQIRRHFIEVPEGATWAEVTVCSCSSEVSAKFVLHAVQLVKQRAYRSHEFYKFCSLPEKGTLTEAFPVLGGKAIEFCIARWWASLSDVNIDYTISFHGIVCTAPQLNIHASEGINRFDVQSSLKYEDLAPCITLKNWVQTLRPVSAKTKPLGSRDVLPNNRQLYEMVLTYNFHQPKSGEVTPSCPLLCELLYESEFDSQLWIIFDQNKRQMGSGDAYPHQYSLKLEKGDYTIRLQIRHEQISDLERLKDLPFIVSHRLSNTLSLDIHENHSFALLGKKKSSNLTLPPKYNQPFFVTSLPDDKIPKGAGPGCYLAGSLTLSKTELGKKADVIPVHYYLIPPPTKTKNGSKDKEKDSEKEKDLKEEFTEALRDLKIQWMTKLDSSDIYNELKETYPNYLPLYVARLHQLDAEKERMKRLNEIVDAANAVISHIDQTALAVYIAMKTDPRPDAATIKNDMDKQKSTLVDALCRKGCALADHLLHTQAQDGAISTDAEGKEEEGESPLDSLAETFWETTKWTDLFDNKVLTFAYKHALVNKMYGRGLKFATKLVEEKPTKENWKNCIQLMKLLGWTHCASFTENWLPIMYPPDYCVF</sequence>
<protein>
    <recommendedName>
        <fullName>Tripeptidyl-peptidase 2</fullName>
        <shortName>TPP-2</shortName>
        <ecNumber evidence="6 7">3.4.14.10</ecNumber>
    </recommendedName>
    <alternativeName>
        <fullName>Tripeptidyl aminopeptidase</fullName>
    </alternativeName>
    <alternativeName>
        <fullName>Tripeptidyl-peptidase II</fullName>
        <shortName>TPP-II</shortName>
    </alternativeName>
</protein>